<name>TSAD_METNO</name>
<sequence>MNVLGIETTCDETAAAIVAAAEDGRGVIRANEVLSQIAEHAAYGGVVPEIAARAHVEVLDRLIARALHETGLVFDDLDGIAVAAGPGLIGGVLVGLVTAKTLALVTRKPLLAVNHLEAHALTARLTEGIGFPYLLLLASGGHTQLVAVKGVGEYLRLGTTIDDAIGEAFDKVAKLLGLAYPGGPEVERAAETGNPERFALPRPMLGRREPNFSLSGLKTALRLEAERIAPLTNQDVADLCASFQAAIVDVVVDRVRGALRAFGDVAGHPTALVAAGGVAANGALRRALTQLAGEAGLPLVAPPLPLCGDNGAMIAWAGLERLRLGLIDDITAPARPRWPFAEALPATAG</sequence>
<feature type="chain" id="PRO_1000184970" description="tRNA N6-adenosine threonylcarbamoyltransferase">
    <location>
        <begin position="1"/>
        <end position="349"/>
    </location>
</feature>
<feature type="binding site" evidence="1">
    <location>
        <position position="115"/>
    </location>
    <ligand>
        <name>Fe cation</name>
        <dbReference type="ChEBI" id="CHEBI:24875"/>
    </ligand>
</feature>
<feature type="binding site" evidence="1">
    <location>
        <position position="119"/>
    </location>
    <ligand>
        <name>Fe cation</name>
        <dbReference type="ChEBI" id="CHEBI:24875"/>
    </ligand>
</feature>
<feature type="binding site" evidence="1">
    <location>
        <begin position="137"/>
        <end position="141"/>
    </location>
    <ligand>
        <name>substrate</name>
    </ligand>
</feature>
<feature type="binding site" evidence="1">
    <location>
        <position position="170"/>
    </location>
    <ligand>
        <name>substrate</name>
    </ligand>
</feature>
<feature type="binding site" evidence="1">
    <location>
        <position position="183"/>
    </location>
    <ligand>
        <name>substrate</name>
    </ligand>
</feature>
<feature type="binding site" evidence="1">
    <location>
        <position position="281"/>
    </location>
    <ligand>
        <name>substrate</name>
    </ligand>
</feature>
<feature type="binding site" evidence="1">
    <location>
        <position position="309"/>
    </location>
    <ligand>
        <name>Fe cation</name>
        <dbReference type="ChEBI" id="CHEBI:24875"/>
    </ligand>
</feature>
<accession>B8IBT1</accession>
<comment type="function">
    <text evidence="1">Required for the formation of a threonylcarbamoyl group on adenosine at position 37 (t(6)A37) in tRNAs that read codons beginning with adenine. Is involved in the transfer of the threonylcarbamoyl moiety of threonylcarbamoyl-AMP (TC-AMP) to the N6 group of A37, together with TsaE and TsaB. TsaD likely plays a direct catalytic role in this reaction.</text>
</comment>
<comment type="catalytic activity">
    <reaction evidence="1">
        <text>L-threonylcarbamoyladenylate + adenosine(37) in tRNA = N(6)-L-threonylcarbamoyladenosine(37) in tRNA + AMP + H(+)</text>
        <dbReference type="Rhea" id="RHEA:37059"/>
        <dbReference type="Rhea" id="RHEA-COMP:10162"/>
        <dbReference type="Rhea" id="RHEA-COMP:10163"/>
        <dbReference type="ChEBI" id="CHEBI:15378"/>
        <dbReference type="ChEBI" id="CHEBI:73682"/>
        <dbReference type="ChEBI" id="CHEBI:74411"/>
        <dbReference type="ChEBI" id="CHEBI:74418"/>
        <dbReference type="ChEBI" id="CHEBI:456215"/>
        <dbReference type="EC" id="2.3.1.234"/>
    </reaction>
</comment>
<comment type="cofactor">
    <cofactor evidence="1">
        <name>Fe(2+)</name>
        <dbReference type="ChEBI" id="CHEBI:29033"/>
    </cofactor>
    <text evidence="1">Binds 1 Fe(2+) ion per subunit.</text>
</comment>
<comment type="subcellular location">
    <subcellularLocation>
        <location evidence="1">Cytoplasm</location>
    </subcellularLocation>
</comment>
<comment type="similarity">
    <text evidence="1">Belongs to the KAE1 / TsaD family.</text>
</comment>
<reference key="1">
    <citation type="submission" date="2009-01" db="EMBL/GenBank/DDBJ databases">
        <title>Complete sequence of chromosome of Methylobacterium nodulans ORS 2060.</title>
        <authorList>
            <consortium name="US DOE Joint Genome Institute"/>
            <person name="Lucas S."/>
            <person name="Copeland A."/>
            <person name="Lapidus A."/>
            <person name="Glavina del Rio T."/>
            <person name="Dalin E."/>
            <person name="Tice H."/>
            <person name="Bruce D."/>
            <person name="Goodwin L."/>
            <person name="Pitluck S."/>
            <person name="Sims D."/>
            <person name="Brettin T."/>
            <person name="Detter J.C."/>
            <person name="Han C."/>
            <person name="Larimer F."/>
            <person name="Land M."/>
            <person name="Hauser L."/>
            <person name="Kyrpides N."/>
            <person name="Ivanova N."/>
            <person name="Marx C.J."/>
            <person name="Richardson P."/>
        </authorList>
    </citation>
    <scope>NUCLEOTIDE SEQUENCE [LARGE SCALE GENOMIC DNA]</scope>
    <source>
        <strain>LMG 21967 / CNCM I-2342 / ORS 2060</strain>
    </source>
</reference>
<gene>
    <name evidence="1" type="primary">tsaD</name>
    <name type="synonym">gcp</name>
    <name type="ordered locus">Mnod_4467</name>
</gene>
<dbReference type="EC" id="2.3.1.234" evidence="1"/>
<dbReference type="EMBL" id="CP001349">
    <property type="protein sequence ID" value="ACL59335.1"/>
    <property type="molecule type" value="Genomic_DNA"/>
</dbReference>
<dbReference type="RefSeq" id="WP_015930973.1">
    <property type="nucleotide sequence ID" value="NC_011894.1"/>
</dbReference>
<dbReference type="SMR" id="B8IBT1"/>
<dbReference type="STRING" id="460265.Mnod_4467"/>
<dbReference type="KEGG" id="mno:Mnod_4467"/>
<dbReference type="eggNOG" id="COG0533">
    <property type="taxonomic scope" value="Bacteria"/>
</dbReference>
<dbReference type="HOGENOM" id="CLU_023208_0_2_5"/>
<dbReference type="OrthoDB" id="9806197at2"/>
<dbReference type="Proteomes" id="UP000008207">
    <property type="component" value="Chromosome"/>
</dbReference>
<dbReference type="GO" id="GO:0005737">
    <property type="term" value="C:cytoplasm"/>
    <property type="evidence" value="ECO:0007669"/>
    <property type="project" value="UniProtKB-SubCell"/>
</dbReference>
<dbReference type="GO" id="GO:0005506">
    <property type="term" value="F:iron ion binding"/>
    <property type="evidence" value="ECO:0007669"/>
    <property type="project" value="UniProtKB-UniRule"/>
</dbReference>
<dbReference type="GO" id="GO:0061711">
    <property type="term" value="F:N(6)-L-threonylcarbamoyladenine synthase activity"/>
    <property type="evidence" value="ECO:0007669"/>
    <property type="project" value="UniProtKB-EC"/>
</dbReference>
<dbReference type="GO" id="GO:0002949">
    <property type="term" value="P:tRNA threonylcarbamoyladenosine modification"/>
    <property type="evidence" value="ECO:0007669"/>
    <property type="project" value="UniProtKB-UniRule"/>
</dbReference>
<dbReference type="FunFam" id="3.30.420.40:FF:000012">
    <property type="entry name" value="tRNA N6-adenosine threonylcarbamoyltransferase"/>
    <property type="match status" value="1"/>
</dbReference>
<dbReference type="Gene3D" id="3.30.420.40">
    <property type="match status" value="2"/>
</dbReference>
<dbReference type="HAMAP" id="MF_01445">
    <property type="entry name" value="TsaD"/>
    <property type="match status" value="1"/>
</dbReference>
<dbReference type="InterPro" id="IPR043129">
    <property type="entry name" value="ATPase_NBD"/>
</dbReference>
<dbReference type="InterPro" id="IPR000905">
    <property type="entry name" value="Gcp-like_dom"/>
</dbReference>
<dbReference type="InterPro" id="IPR017861">
    <property type="entry name" value="KAE1/TsaD"/>
</dbReference>
<dbReference type="InterPro" id="IPR022450">
    <property type="entry name" value="TsaD"/>
</dbReference>
<dbReference type="NCBIfam" id="TIGR00329">
    <property type="entry name" value="gcp_kae1"/>
    <property type="match status" value="1"/>
</dbReference>
<dbReference type="NCBIfam" id="TIGR03723">
    <property type="entry name" value="T6A_TsaD_YgjD"/>
    <property type="match status" value="1"/>
</dbReference>
<dbReference type="PANTHER" id="PTHR11735">
    <property type="entry name" value="TRNA N6-ADENOSINE THREONYLCARBAMOYLTRANSFERASE"/>
    <property type="match status" value="1"/>
</dbReference>
<dbReference type="PANTHER" id="PTHR11735:SF6">
    <property type="entry name" value="TRNA N6-ADENOSINE THREONYLCARBAMOYLTRANSFERASE, MITOCHONDRIAL"/>
    <property type="match status" value="1"/>
</dbReference>
<dbReference type="Pfam" id="PF00814">
    <property type="entry name" value="TsaD"/>
    <property type="match status" value="1"/>
</dbReference>
<dbReference type="PRINTS" id="PR00789">
    <property type="entry name" value="OSIALOPTASE"/>
</dbReference>
<dbReference type="SUPFAM" id="SSF53067">
    <property type="entry name" value="Actin-like ATPase domain"/>
    <property type="match status" value="2"/>
</dbReference>
<evidence type="ECO:0000255" key="1">
    <source>
        <dbReference type="HAMAP-Rule" id="MF_01445"/>
    </source>
</evidence>
<keyword id="KW-0012">Acyltransferase</keyword>
<keyword id="KW-0963">Cytoplasm</keyword>
<keyword id="KW-0408">Iron</keyword>
<keyword id="KW-0479">Metal-binding</keyword>
<keyword id="KW-1185">Reference proteome</keyword>
<keyword id="KW-0808">Transferase</keyword>
<keyword id="KW-0819">tRNA processing</keyword>
<proteinExistence type="inferred from homology"/>
<organism>
    <name type="scientific">Methylobacterium nodulans (strain LMG 21967 / CNCM I-2342 / ORS 2060)</name>
    <dbReference type="NCBI Taxonomy" id="460265"/>
    <lineage>
        <taxon>Bacteria</taxon>
        <taxon>Pseudomonadati</taxon>
        <taxon>Pseudomonadota</taxon>
        <taxon>Alphaproteobacteria</taxon>
        <taxon>Hyphomicrobiales</taxon>
        <taxon>Methylobacteriaceae</taxon>
        <taxon>Methylobacterium</taxon>
    </lineage>
</organism>
<protein>
    <recommendedName>
        <fullName evidence="1">tRNA N6-adenosine threonylcarbamoyltransferase</fullName>
        <ecNumber evidence="1">2.3.1.234</ecNumber>
    </recommendedName>
    <alternativeName>
        <fullName evidence="1">N6-L-threonylcarbamoyladenine synthase</fullName>
        <shortName evidence="1">t(6)A synthase</shortName>
    </alternativeName>
    <alternativeName>
        <fullName evidence="1">t(6)A37 threonylcarbamoyladenosine biosynthesis protein TsaD</fullName>
    </alternativeName>
    <alternativeName>
        <fullName evidence="1">tRNA threonylcarbamoyladenosine biosynthesis protein TsaD</fullName>
    </alternativeName>
</protein>